<gene>
    <name evidence="1" type="primary">purM</name>
    <name type="ordered locus">BH09560</name>
</gene>
<organism>
    <name type="scientific">Bartonella henselae (strain ATCC 49882 / DSM 28221 / CCUG 30454 / Houston 1)</name>
    <name type="common">Rochalimaea henselae</name>
    <dbReference type="NCBI Taxonomy" id="283166"/>
    <lineage>
        <taxon>Bacteria</taxon>
        <taxon>Pseudomonadati</taxon>
        <taxon>Pseudomonadota</taxon>
        <taxon>Alphaproteobacteria</taxon>
        <taxon>Hyphomicrobiales</taxon>
        <taxon>Bartonellaceae</taxon>
        <taxon>Bartonella</taxon>
    </lineage>
</organism>
<proteinExistence type="inferred from homology"/>
<protein>
    <recommendedName>
        <fullName evidence="1">Phosphoribosylformylglycinamidine cyclo-ligase</fullName>
        <ecNumber evidence="1">6.3.3.1</ecNumber>
    </recommendedName>
    <alternativeName>
        <fullName evidence="1">AIR synthase</fullName>
    </alternativeName>
    <alternativeName>
        <fullName evidence="1">AIRS</fullName>
    </alternativeName>
    <alternativeName>
        <fullName evidence="1">Phosphoribosyl-aminoimidazole synthetase</fullName>
    </alternativeName>
</protein>
<feature type="chain" id="PRO_0000258333" description="Phosphoribosylformylglycinamidine cyclo-ligase">
    <location>
        <begin position="1"/>
        <end position="361"/>
    </location>
</feature>
<reference key="1">
    <citation type="journal article" date="2004" name="Proc. Natl. Acad. Sci. U.S.A.">
        <title>The louse-borne human pathogen Bartonella quintana is a genomic derivative of the zoonotic agent Bartonella henselae.</title>
        <authorList>
            <person name="Alsmark U.C.M."/>
            <person name="Frank A.C."/>
            <person name="Karlberg E.O."/>
            <person name="Legault B.-A."/>
            <person name="Ardell D.H."/>
            <person name="Canbaeck B."/>
            <person name="Eriksson A.-S."/>
            <person name="Naeslund A.K."/>
            <person name="Handley S.A."/>
            <person name="Huvet M."/>
            <person name="La Scola B."/>
            <person name="Holmberg M."/>
            <person name="Andersson S.G.E."/>
        </authorList>
    </citation>
    <scope>NUCLEOTIDE SEQUENCE [LARGE SCALE GENOMIC DNA]</scope>
    <source>
        <strain>ATCC 49882 / DSM 28221 / CCUG 30454 / Houston 1</strain>
    </source>
</reference>
<dbReference type="EC" id="6.3.3.1" evidence="1"/>
<dbReference type="EMBL" id="BX897699">
    <property type="protein sequence ID" value="CAF27749.1"/>
    <property type="molecule type" value="Genomic_DNA"/>
</dbReference>
<dbReference type="RefSeq" id="WP_011180831.1">
    <property type="nucleotide sequence ID" value="NZ_LRIJ02000001.1"/>
</dbReference>
<dbReference type="SMR" id="Q6G5R9"/>
<dbReference type="PaxDb" id="283166-BH09560"/>
<dbReference type="EnsemblBacteria" id="CAF27749">
    <property type="protein sequence ID" value="CAF27749"/>
    <property type="gene ID" value="BH09560"/>
</dbReference>
<dbReference type="GeneID" id="92985351"/>
<dbReference type="KEGG" id="bhe:BH09560"/>
<dbReference type="eggNOG" id="COG0150">
    <property type="taxonomic scope" value="Bacteria"/>
</dbReference>
<dbReference type="OrthoDB" id="9777881at2"/>
<dbReference type="UniPathway" id="UPA00074">
    <property type="reaction ID" value="UER00129"/>
</dbReference>
<dbReference type="Proteomes" id="UP000000421">
    <property type="component" value="Chromosome"/>
</dbReference>
<dbReference type="GO" id="GO:0005829">
    <property type="term" value="C:cytosol"/>
    <property type="evidence" value="ECO:0007669"/>
    <property type="project" value="TreeGrafter"/>
</dbReference>
<dbReference type="GO" id="GO:0005524">
    <property type="term" value="F:ATP binding"/>
    <property type="evidence" value="ECO:0007669"/>
    <property type="project" value="UniProtKB-KW"/>
</dbReference>
<dbReference type="GO" id="GO:0004637">
    <property type="term" value="F:phosphoribosylamine-glycine ligase activity"/>
    <property type="evidence" value="ECO:0007669"/>
    <property type="project" value="TreeGrafter"/>
</dbReference>
<dbReference type="GO" id="GO:0004641">
    <property type="term" value="F:phosphoribosylformylglycinamidine cyclo-ligase activity"/>
    <property type="evidence" value="ECO:0007669"/>
    <property type="project" value="UniProtKB-UniRule"/>
</dbReference>
<dbReference type="GO" id="GO:0006189">
    <property type="term" value="P:'de novo' IMP biosynthetic process"/>
    <property type="evidence" value="ECO:0007669"/>
    <property type="project" value="UniProtKB-UniRule"/>
</dbReference>
<dbReference type="GO" id="GO:0046084">
    <property type="term" value="P:adenine biosynthetic process"/>
    <property type="evidence" value="ECO:0007669"/>
    <property type="project" value="TreeGrafter"/>
</dbReference>
<dbReference type="CDD" id="cd02196">
    <property type="entry name" value="PurM"/>
    <property type="match status" value="1"/>
</dbReference>
<dbReference type="FunFam" id="3.30.1330.10:FF:000001">
    <property type="entry name" value="Phosphoribosylformylglycinamidine cyclo-ligase"/>
    <property type="match status" value="1"/>
</dbReference>
<dbReference type="FunFam" id="3.90.650.10:FF:000019">
    <property type="entry name" value="Trifunctional purine biosynthetic protein adenosine-3"/>
    <property type="match status" value="1"/>
</dbReference>
<dbReference type="Gene3D" id="3.90.650.10">
    <property type="entry name" value="PurM-like C-terminal domain"/>
    <property type="match status" value="1"/>
</dbReference>
<dbReference type="Gene3D" id="3.30.1330.10">
    <property type="entry name" value="PurM-like, N-terminal domain"/>
    <property type="match status" value="1"/>
</dbReference>
<dbReference type="HAMAP" id="MF_00741">
    <property type="entry name" value="AIRS"/>
    <property type="match status" value="1"/>
</dbReference>
<dbReference type="InterPro" id="IPR010918">
    <property type="entry name" value="PurM-like_C_dom"/>
</dbReference>
<dbReference type="InterPro" id="IPR036676">
    <property type="entry name" value="PurM-like_C_sf"/>
</dbReference>
<dbReference type="InterPro" id="IPR016188">
    <property type="entry name" value="PurM-like_N"/>
</dbReference>
<dbReference type="InterPro" id="IPR036921">
    <property type="entry name" value="PurM-like_N_sf"/>
</dbReference>
<dbReference type="InterPro" id="IPR004733">
    <property type="entry name" value="PurM_cligase"/>
</dbReference>
<dbReference type="NCBIfam" id="TIGR00878">
    <property type="entry name" value="purM"/>
    <property type="match status" value="1"/>
</dbReference>
<dbReference type="PANTHER" id="PTHR10520:SF12">
    <property type="entry name" value="TRIFUNCTIONAL PURINE BIOSYNTHETIC PROTEIN ADENOSINE-3"/>
    <property type="match status" value="1"/>
</dbReference>
<dbReference type="PANTHER" id="PTHR10520">
    <property type="entry name" value="TRIFUNCTIONAL PURINE BIOSYNTHETIC PROTEIN ADENOSINE-3-RELATED"/>
    <property type="match status" value="1"/>
</dbReference>
<dbReference type="Pfam" id="PF00586">
    <property type="entry name" value="AIRS"/>
    <property type="match status" value="1"/>
</dbReference>
<dbReference type="Pfam" id="PF02769">
    <property type="entry name" value="AIRS_C"/>
    <property type="match status" value="1"/>
</dbReference>
<dbReference type="SUPFAM" id="SSF56042">
    <property type="entry name" value="PurM C-terminal domain-like"/>
    <property type="match status" value="1"/>
</dbReference>
<dbReference type="SUPFAM" id="SSF55326">
    <property type="entry name" value="PurM N-terminal domain-like"/>
    <property type="match status" value="1"/>
</dbReference>
<evidence type="ECO:0000255" key="1">
    <source>
        <dbReference type="HAMAP-Rule" id="MF_00741"/>
    </source>
</evidence>
<keyword id="KW-0067">ATP-binding</keyword>
<keyword id="KW-0963">Cytoplasm</keyword>
<keyword id="KW-0436">Ligase</keyword>
<keyword id="KW-0547">Nucleotide-binding</keyword>
<keyword id="KW-0658">Purine biosynthesis</keyword>
<sequence>MNNQDLINDKSKNGLTYAKAGVNIDMGNAMVEKIKPFIRATKRAGTDAEIGGFGGLFDLKAAGFTDPILVAANDGVGTKLKIAIEVGIHDTIGIDLVAMCVNDLLVQGAEPLFFLDYFATGKLDPEQGAAIVSGIAKGCQQAGAALIGGETAEMPDMYAKGDYDLAGFAVGAAERSALLPSKDLTEGDIILGLSSSGIHSNGFSLVRRIIQQSDLKWNDHAPFNPQMNLGTALLTPTRIYVKSLLPIIKSYKGIKALAHITGGGFLENIPRVLPSSLCAEINLSAIHVPSIFSWIAKQGKIEKIEMLRTFNCGVGMIIIVAQHEVEKVTQELKMQGETVTLLGKLTKRQNKGITFKGALHL</sequence>
<comment type="catalytic activity">
    <reaction evidence="1">
        <text>2-formamido-N(1)-(5-O-phospho-beta-D-ribosyl)acetamidine + ATP = 5-amino-1-(5-phospho-beta-D-ribosyl)imidazole + ADP + phosphate + H(+)</text>
        <dbReference type="Rhea" id="RHEA:23032"/>
        <dbReference type="ChEBI" id="CHEBI:15378"/>
        <dbReference type="ChEBI" id="CHEBI:30616"/>
        <dbReference type="ChEBI" id="CHEBI:43474"/>
        <dbReference type="ChEBI" id="CHEBI:137981"/>
        <dbReference type="ChEBI" id="CHEBI:147287"/>
        <dbReference type="ChEBI" id="CHEBI:456216"/>
        <dbReference type="EC" id="6.3.3.1"/>
    </reaction>
</comment>
<comment type="pathway">
    <text evidence="1">Purine metabolism; IMP biosynthesis via de novo pathway; 5-amino-1-(5-phospho-D-ribosyl)imidazole from N(2)-formyl-N(1)-(5-phospho-D-ribosyl)glycinamide: step 2/2.</text>
</comment>
<comment type="subcellular location">
    <subcellularLocation>
        <location evidence="1">Cytoplasm</location>
    </subcellularLocation>
</comment>
<comment type="similarity">
    <text evidence="1">Belongs to the AIR synthase family.</text>
</comment>
<accession>Q6G5R9</accession>
<name>PUR5_BARHE</name>